<organism>
    <name type="scientific">Gnetum parvifolium</name>
    <name type="common">Small-leaved jointfir</name>
    <name type="synonym">Gnetum scandens var. parvifolium</name>
    <dbReference type="NCBI Taxonomy" id="33153"/>
    <lineage>
        <taxon>Eukaryota</taxon>
        <taxon>Viridiplantae</taxon>
        <taxon>Streptophyta</taxon>
        <taxon>Embryophyta</taxon>
        <taxon>Tracheophyta</taxon>
        <taxon>Spermatophyta</taxon>
        <taxon>Gnetopsida</taxon>
        <taxon>Gnetidae</taxon>
        <taxon>Gnetales</taxon>
        <taxon>Gnetaceae</taxon>
        <taxon>Gnetum</taxon>
    </lineage>
</organism>
<sequence>MQFDEKKEMFTIPEFGQIQLEGFCRFIEYDLLDKFVKFPKIANTQKEVEFLFDKNYKIIEPSIKEKDAVYQRLTFSSKLFVPAFFIYWNKIKKKKIIYLGEIPLMNNNGTFLINGNYRVVVNQLIRSPGIYYSLERKRTGNIYTSTLISDCGGRLKFEIDIKQNIWIRISRKKNVSILVFFFAMGLDIEEILKNTYYIKGFEGWGLICNEKLKHKLSRKKGAIFTFYEELGSRGDNNDFVFSESLSESLYKKFTNFLSKRCKLGRIGRRNLNKKLNLEIPDNEIFLLPQDVLAIIDYLIKVSYGVGTVDNIDHLQNRRFFSVADLLKKEVGLALNRVKVLIQKTMQTIEMLRKKQNKRIMLPEIPLVSTQITKTLKHFFGLHPLSQFLEQTNSLAEILHARKVSFLGPGGLTERTANFRARDIHPSYYGRFCPINTPEGQNAGLIASLAISARINFGFLESPFYNVAKKYQKAKKIVYLSPSEDVYYRIALGNCLSVDQKIPEKKNTPTQYHQEFLSIAWEQIHFRCFLPLQYFSIGVSLIPFLEHNDATRALMGSNMQRQAVPSVQPEKCIVGTGLEGQVALDSGALAISTQEGRIQYSDAATIVSVLKGNTTQTELQIYQRSNSNTLMHQKTHASQAKYVRKGQILADGAAMLGGEICLGKNILVAYMPWQGYNFEDAILISECLIYKDIFTSFHITRYETTICTAECEKMTREIPRLATYSLRHLDKNGLVRVGSWVQPGDVLVGKLRPRSSEDFSRFPELRLLQDLFCTSPIKETCLRANGKGRVIDVNWSKLQAFCKDDLEKGHQDDDTEDIYDEAEDALEKVYQLNNYNLSSDSEKVHVYLLEKRKIQVGDKVAGRHGNKGIVSIVLSRQDMPFLQSGISLDMVLNPLSVPSRMNVGQIFECLLGLAGTMNKHYRIPPFDERYEQEASRKLVFYELYKASEQTANPWIFELEHLGKTQIFDGRTGEIFEQPVTTGNAYILKLIHQVNDKMHARSTGNYARITQQPVQGKSKGGGQRLGEMEVWALESFGVAYVLREMLTVKADHIRARKKILRSILDGHSVPKADSATESFRVLSKELNSLALELNHTIISGKYFNLDRIEV</sequence>
<dbReference type="EC" id="2.7.7.6" evidence="1"/>
<dbReference type="EMBL" id="AB295946">
    <property type="protein sequence ID" value="BAF64895.1"/>
    <property type="molecule type" value="Genomic_DNA"/>
</dbReference>
<dbReference type="EMBL" id="AP009569">
    <property type="protein sequence ID" value="BAH11298.1"/>
    <property type="molecule type" value="Genomic_DNA"/>
</dbReference>
<dbReference type="RefSeq" id="YP_002519787.1">
    <property type="nucleotide sequence ID" value="NC_011942.1"/>
</dbReference>
<dbReference type="SMR" id="A6BM50"/>
<dbReference type="GeneID" id="7368180"/>
<dbReference type="GO" id="GO:0009507">
    <property type="term" value="C:chloroplast"/>
    <property type="evidence" value="ECO:0007669"/>
    <property type="project" value="UniProtKB-SubCell"/>
</dbReference>
<dbReference type="GO" id="GO:0000428">
    <property type="term" value="C:DNA-directed RNA polymerase complex"/>
    <property type="evidence" value="ECO:0007669"/>
    <property type="project" value="UniProtKB-KW"/>
</dbReference>
<dbReference type="GO" id="GO:0005739">
    <property type="term" value="C:mitochondrion"/>
    <property type="evidence" value="ECO:0007669"/>
    <property type="project" value="GOC"/>
</dbReference>
<dbReference type="GO" id="GO:0003677">
    <property type="term" value="F:DNA binding"/>
    <property type="evidence" value="ECO:0007669"/>
    <property type="project" value="UniProtKB-UniRule"/>
</dbReference>
<dbReference type="GO" id="GO:0003899">
    <property type="term" value="F:DNA-directed RNA polymerase activity"/>
    <property type="evidence" value="ECO:0007669"/>
    <property type="project" value="UniProtKB-UniRule"/>
</dbReference>
<dbReference type="GO" id="GO:0032549">
    <property type="term" value="F:ribonucleoside binding"/>
    <property type="evidence" value="ECO:0007669"/>
    <property type="project" value="InterPro"/>
</dbReference>
<dbReference type="GO" id="GO:0006351">
    <property type="term" value="P:DNA-templated transcription"/>
    <property type="evidence" value="ECO:0007669"/>
    <property type="project" value="UniProtKB-UniRule"/>
</dbReference>
<dbReference type="CDD" id="cd00653">
    <property type="entry name" value="RNA_pol_B_RPB2"/>
    <property type="match status" value="1"/>
</dbReference>
<dbReference type="Gene3D" id="2.40.50.100">
    <property type="match status" value="1"/>
</dbReference>
<dbReference type="Gene3D" id="2.40.50.150">
    <property type="match status" value="1"/>
</dbReference>
<dbReference type="Gene3D" id="3.90.1100.10">
    <property type="match status" value="1"/>
</dbReference>
<dbReference type="Gene3D" id="2.30.150.10">
    <property type="entry name" value="DNA-directed RNA polymerase, beta subunit, external 1 domain"/>
    <property type="match status" value="1"/>
</dbReference>
<dbReference type="Gene3D" id="2.40.270.10">
    <property type="entry name" value="DNA-directed RNA polymerase, subunit 2, domain 6"/>
    <property type="match status" value="2"/>
</dbReference>
<dbReference type="Gene3D" id="3.90.1800.10">
    <property type="entry name" value="RNA polymerase alpha subunit dimerisation domain"/>
    <property type="match status" value="1"/>
</dbReference>
<dbReference type="Gene3D" id="3.90.1110.10">
    <property type="entry name" value="RNA polymerase Rpb2, domain 2"/>
    <property type="match status" value="1"/>
</dbReference>
<dbReference type="HAMAP" id="MF_01321">
    <property type="entry name" value="RNApol_bact_RpoB"/>
    <property type="match status" value="1"/>
</dbReference>
<dbReference type="InterPro" id="IPR042107">
    <property type="entry name" value="DNA-dir_RNA_pol_bsu_ext_1_sf"/>
</dbReference>
<dbReference type="InterPro" id="IPR015712">
    <property type="entry name" value="DNA-dir_RNA_pol_su2"/>
</dbReference>
<dbReference type="InterPro" id="IPR007120">
    <property type="entry name" value="DNA-dir_RNAP_su2_dom"/>
</dbReference>
<dbReference type="InterPro" id="IPR037033">
    <property type="entry name" value="DNA-dir_RNAP_su2_hyb_sf"/>
</dbReference>
<dbReference type="InterPro" id="IPR010243">
    <property type="entry name" value="RNA_pol_bsu_bac"/>
</dbReference>
<dbReference type="InterPro" id="IPR007121">
    <property type="entry name" value="RNA_pol_bsu_CS"/>
</dbReference>
<dbReference type="InterPro" id="IPR007642">
    <property type="entry name" value="RNA_pol_Rpb2_2"/>
</dbReference>
<dbReference type="InterPro" id="IPR037034">
    <property type="entry name" value="RNA_pol_Rpb2_2_sf"/>
</dbReference>
<dbReference type="InterPro" id="IPR007645">
    <property type="entry name" value="RNA_pol_Rpb2_3"/>
</dbReference>
<dbReference type="InterPro" id="IPR007641">
    <property type="entry name" value="RNA_pol_Rpb2_7"/>
</dbReference>
<dbReference type="InterPro" id="IPR014724">
    <property type="entry name" value="RNA_pol_RPB2_OB-fold"/>
</dbReference>
<dbReference type="NCBIfam" id="NF001616">
    <property type="entry name" value="PRK00405.1"/>
    <property type="match status" value="1"/>
</dbReference>
<dbReference type="PANTHER" id="PTHR20856">
    <property type="entry name" value="DNA-DIRECTED RNA POLYMERASE I SUBUNIT 2"/>
    <property type="match status" value="1"/>
</dbReference>
<dbReference type="Pfam" id="PF04561">
    <property type="entry name" value="RNA_pol_Rpb2_2"/>
    <property type="match status" value="1"/>
</dbReference>
<dbReference type="Pfam" id="PF04565">
    <property type="entry name" value="RNA_pol_Rpb2_3"/>
    <property type="match status" value="1"/>
</dbReference>
<dbReference type="Pfam" id="PF00562">
    <property type="entry name" value="RNA_pol_Rpb2_6"/>
    <property type="match status" value="1"/>
</dbReference>
<dbReference type="Pfam" id="PF04560">
    <property type="entry name" value="RNA_pol_Rpb2_7"/>
    <property type="match status" value="1"/>
</dbReference>
<dbReference type="SUPFAM" id="SSF64484">
    <property type="entry name" value="beta and beta-prime subunits of DNA dependent RNA-polymerase"/>
    <property type="match status" value="1"/>
</dbReference>
<dbReference type="PROSITE" id="PS01166">
    <property type="entry name" value="RNA_POL_BETA"/>
    <property type="match status" value="1"/>
</dbReference>
<feature type="chain" id="PRO_0000300442" description="DNA-directed RNA polymerase subunit beta">
    <location>
        <begin position="1"/>
        <end position="1108"/>
    </location>
</feature>
<reference key="1">
    <citation type="journal article" date="2007" name="Mol. Biol. Evol.">
        <title>Chloroplast genome (cpDNA) of Cycas taitungensis and 56 cp protein-coding genes of Gnetum parvifolium: insights into cpDNA evolution and phylogeny of extant seed plants.</title>
        <authorList>
            <person name="Wu C.-S."/>
            <person name="Wang Y.-N."/>
            <person name="Liu S.-M."/>
            <person name="Chaw S.-M."/>
        </authorList>
    </citation>
    <scope>NUCLEOTIDE SEQUENCE [LARGE SCALE GENOMIC DNA]</scope>
</reference>
<reference key="2">
    <citation type="journal article" date="2009" name="Mol. Phylogenet. Evol.">
        <title>Evolution of reduced and compact chloroplast genomes (cpDNAs) in gnetophytes: Selection toward a lower-cost strategy.</title>
        <authorList>
            <person name="Wu C.-S."/>
            <person name="Lai Y.-T."/>
            <person name="Lin C.-P."/>
            <person name="Wang Y.-N."/>
            <person name="Chaw S.-M."/>
        </authorList>
    </citation>
    <scope>NUCLEOTIDE SEQUENCE [LARGE SCALE GENOMIC DNA]</scope>
</reference>
<name>RPOB_GNEPA</name>
<evidence type="ECO:0000255" key="1">
    <source>
        <dbReference type="HAMAP-Rule" id="MF_01321"/>
    </source>
</evidence>
<proteinExistence type="inferred from homology"/>
<comment type="function">
    <text evidence="1">DNA-dependent RNA polymerase catalyzes the transcription of DNA into RNA using the four ribonucleoside triphosphates as substrates.</text>
</comment>
<comment type="catalytic activity">
    <reaction evidence="1">
        <text>RNA(n) + a ribonucleoside 5'-triphosphate = RNA(n+1) + diphosphate</text>
        <dbReference type="Rhea" id="RHEA:21248"/>
        <dbReference type="Rhea" id="RHEA-COMP:14527"/>
        <dbReference type="Rhea" id="RHEA-COMP:17342"/>
        <dbReference type="ChEBI" id="CHEBI:33019"/>
        <dbReference type="ChEBI" id="CHEBI:61557"/>
        <dbReference type="ChEBI" id="CHEBI:140395"/>
        <dbReference type="EC" id="2.7.7.6"/>
    </reaction>
</comment>
<comment type="subunit">
    <text evidence="1">In plastids the minimal PEP RNA polymerase catalytic core is composed of four subunits: alpha, beta, beta', and beta''. When a (nuclear-encoded) sigma factor is associated with the core the holoenzyme is formed, which can initiate transcription.</text>
</comment>
<comment type="subcellular location">
    <subcellularLocation>
        <location>Plastid</location>
        <location>Chloroplast</location>
    </subcellularLocation>
</comment>
<comment type="similarity">
    <text evidence="1">Belongs to the RNA polymerase beta chain family.</text>
</comment>
<geneLocation type="chloroplast"/>
<keyword id="KW-0150">Chloroplast</keyword>
<keyword id="KW-0240">DNA-directed RNA polymerase</keyword>
<keyword id="KW-0548">Nucleotidyltransferase</keyword>
<keyword id="KW-0934">Plastid</keyword>
<keyword id="KW-0804">Transcription</keyword>
<keyword id="KW-0808">Transferase</keyword>
<protein>
    <recommendedName>
        <fullName evidence="1">DNA-directed RNA polymerase subunit beta</fullName>
        <ecNumber evidence="1">2.7.7.6</ecNumber>
    </recommendedName>
    <alternativeName>
        <fullName evidence="1">PEP</fullName>
    </alternativeName>
    <alternativeName>
        <fullName evidence="1">Plastid-encoded RNA polymerase subunit beta</fullName>
        <shortName evidence="1">RNA polymerase subunit beta</shortName>
    </alternativeName>
</protein>
<accession>A6BM50</accession>
<accession>B7ZIB8</accession>
<gene>
    <name evidence="1" type="primary">rpoB</name>
</gene>